<proteinExistence type="inferred from homology"/>
<reference key="1">
    <citation type="submission" date="2007-05" db="EMBL/GenBank/DDBJ databases">
        <title>Complete sequence of Thermotoga petrophila RKU-1.</title>
        <authorList>
            <consortium name="US DOE Joint Genome Institute"/>
            <person name="Copeland A."/>
            <person name="Lucas S."/>
            <person name="Lapidus A."/>
            <person name="Barry K."/>
            <person name="Glavina del Rio T."/>
            <person name="Dalin E."/>
            <person name="Tice H."/>
            <person name="Pitluck S."/>
            <person name="Sims D."/>
            <person name="Brettin T."/>
            <person name="Bruce D."/>
            <person name="Detter J.C."/>
            <person name="Han C."/>
            <person name="Tapia R."/>
            <person name="Schmutz J."/>
            <person name="Larimer F."/>
            <person name="Land M."/>
            <person name="Hauser L."/>
            <person name="Kyrpides N."/>
            <person name="Mikhailova N."/>
            <person name="Nelson K."/>
            <person name="Gogarten J.P."/>
            <person name="Noll K."/>
            <person name="Richardson P."/>
        </authorList>
    </citation>
    <scope>NUCLEOTIDE SEQUENCE [LARGE SCALE GENOMIC DNA]</scope>
    <source>
        <strain>ATCC BAA-488 / DSM 13995 / JCM 10881 / RKU-1</strain>
    </source>
</reference>
<comment type="function">
    <text evidence="1">Specifically methylates the N7 position of a guanine in 16S rRNA.</text>
</comment>
<comment type="subcellular location">
    <subcellularLocation>
        <location evidence="1">Cytoplasm</location>
    </subcellularLocation>
</comment>
<comment type="similarity">
    <text evidence="1">Belongs to the methyltransferase superfamily. RNA methyltransferase RsmG family.</text>
</comment>
<protein>
    <recommendedName>
        <fullName evidence="1">Ribosomal RNA small subunit methyltransferase G</fullName>
        <ecNumber evidence="1">2.1.1.-</ecNumber>
    </recommendedName>
    <alternativeName>
        <fullName evidence="1">16S rRNA 7-methylguanosine methyltransferase</fullName>
        <shortName evidence="1">16S rRNA m7G methyltransferase</shortName>
    </alternativeName>
</protein>
<gene>
    <name evidence="1" type="primary">rsmG</name>
    <name type="ordered locus">Tpet_0223</name>
</gene>
<evidence type="ECO:0000255" key="1">
    <source>
        <dbReference type="HAMAP-Rule" id="MF_00074"/>
    </source>
</evidence>
<name>RSMG_THEP1</name>
<keyword id="KW-0963">Cytoplasm</keyword>
<keyword id="KW-0489">Methyltransferase</keyword>
<keyword id="KW-0698">rRNA processing</keyword>
<keyword id="KW-0949">S-adenosyl-L-methionine</keyword>
<keyword id="KW-0808">Transferase</keyword>
<organism>
    <name type="scientific">Thermotoga petrophila (strain ATCC BAA-488 / DSM 13995 / JCM 10881 / RKU-1)</name>
    <dbReference type="NCBI Taxonomy" id="390874"/>
    <lineage>
        <taxon>Bacteria</taxon>
        <taxon>Thermotogati</taxon>
        <taxon>Thermotogota</taxon>
        <taxon>Thermotogae</taxon>
        <taxon>Thermotogales</taxon>
        <taxon>Thermotogaceae</taxon>
        <taxon>Thermotoga</taxon>
    </lineage>
</organism>
<feature type="chain" id="PRO_1000010233" description="Ribosomal RNA small subunit methyltransferase G">
    <location>
        <begin position="1"/>
        <end position="228"/>
    </location>
</feature>
<feature type="binding site" evidence="1">
    <location>
        <position position="70"/>
    </location>
    <ligand>
        <name>S-adenosyl-L-methionine</name>
        <dbReference type="ChEBI" id="CHEBI:59789"/>
    </ligand>
</feature>
<feature type="binding site" evidence="1">
    <location>
        <begin position="121"/>
        <end position="122"/>
    </location>
    <ligand>
        <name>S-adenosyl-L-methionine</name>
        <dbReference type="ChEBI" id="CHEBI:59789"/>
    </ligand>
</feature>
<feature type="binding site" evidence="1">
    <location>
        <position position="138"/>
    </location>
    <ligand>
        <name>S-adenosyl-L-methionine</name>
        <dbReference type="ChEBI" id="CHEBI:59789"/>
    </ligand>
</feature>
<dbReference type="EC" id="2.1.1.-" evidence="1"/>
<dbReference type="EMBL" id="CP000702">
    <property type="protein sequence ID" value="ABQ46252.1"/>
    <property type="molecule type" value="Genomic_DNA"/>
</dbReference>
<dbReference type="RefSeq" id="WP_004081032.1">
    <property type="nucleotide sequence ID" value="NC_009486.1"/>
</dbReference>
<dbReference type="SMR" id="A5IJ79"/>
<dbReference type="STRING" id="390874.Tpet_0223"/>
<dbReference type="KEGG" id="tpt:Tpet_0223"/>
<dbReference type="eggNOG" id="COG0357">
    <property type="taxonomic scope" value="Bacteria"/>
</dbReference>
<dbReference type="HOGENOM" id="CLU_065341_0_1_0"/>
<dbReference type="Proteomes" id="UP000006558">
    <property type="component" value="Chromosome"/>
</dbReference>
<dbReference type="GO" id="GO:0005829">
    <property type="term" value="C:cytosol"/>
    <property type="evidence" value="ECO:0007669"/>
    <property type="project" value="TreeGrafter"/>
</dbReference>
<dbReference type="GO" id="GO:0070043">
    <property type="term" value="F:rRNA (guanine-N7-)-methyltransferase activity"/>
    <property type="evidence" value="ECO:0007669"/>
    <property type="project" value="UniProtKB-UniRule"/>
</dbReference>
<dbReference type="CDD" id="cd02440">
    <property type="entry name" value="AdoMet_MTases"/>
    <property type="match status" value="1"/>
</dbReference>
<dbReference type="FunFam" id="3.40.50.150:FF:000585">
    <property type="entry name" value="Ribosomal RNA small subunit methyltransferase G"/>
    <property type="match status" value="1"/>
</dbReference>
<dbReference type="Gene3D" id="3.40.50.150">
    <property type="entry name" value="Vaccinia Virus protein VP39"/>
    <property type="match status" value="1"/>
</dbReference>
<dbReference type="HAMAP" id="MF_00074">
    <property type="entry name" value="16SrRNA_methyltr_G"/>
    <property type="match status" value="1"/>
</dbReference>
<dbReference type="InterPro" id="IPR003682">
    <property type="entry name" value="rRNA_ssu_MeTfrase_G"/>
</dbReference>
<dbReference type="InterPro" id="IPR029063">
    <property type="entry name" value="SAM-dependent_MTases_sf"/>
</dbReference>
<dbReference type="NCBIfam" id="TIGR00138">
    <property type="entry name" value="rsmG_gidB"/>
    <property type="match status" value="1"/>
</dbReference>
<dbReference type="PANTHER" id="PTHR31760">
    <property type="entry name" value="S-ADENOSYL-L-METHIONINE-DEPENDENT METHYLTRANSFERASES SUPERFAMILY PROTEIN"/>
    <property type="match status" value="1"/>
</dbReference>
<dbReference type="PANTHER" id="PTHR31760:SF0">
    <property type="entry name" value="S-ADENOSYL-L-METHIONINE-DEPENDENT METHYLTRANSFERASES SUPERFAMILY PROTEIN"/>
    <property type="match status" value="1"/>
</dbReference>
<dbReference type="Pfam" id="PF02527">
    <property type="entry name" value="GidB"/>
    <property type="match status" value="1"/>
</dbReference>
<dbReference type="PIRSF" id="PIRSF003078">
    <property type="entry name" value="GidB"/>
    <property type="match status" value="1"/>
</dbReference>
<dbReference type="SUPFAM" id="SSF53335">
    <property type="entry name" value="S-adenosyl-L-methionine-dependent methyltransferases"/>
    <property type="match status" value="1"/>
</dbReference>
<sequence>MDSVKNILLEYGLRFQEPQIEKVDKYIEELLGVPYNLTAHRDLDSAVHKNVVEILLPLKEELKGTLLDVGSGNGVPGLILAIFFSKLKVVLLDSREKSVNFLRGVIEKLDLENVSVVKERAENFSKERREEFDYVTARAVARLNVLVEICTPALKTGGKLLFYKGPSYIEELKEAQRAMKELKVELEKVREYSLKTGERRALLILRKYESSPEKYPRRVGVPFKRPLL</sequence>
<accession>A5IJ79</accession>